<dbReference type="EMBL" id="AK005095">
    <property type="protein sequence ID" value="BAB23814.1"/>
    <property type="molecule type" value="mRNA"/>
</dbReference>
<dbReference type="EMBL" id="BC023108">
    <property type="protein sequence ID" value="AAH23108.1"/>
    <property type="molecule type" value="mRNA"/>
</dbReference>
<dbReference type="CCDS" id="CCDS20722.1"/>
<dbReference type="RefSeq" id="NP_081479.1">
    <property type="nucleotide sequence ID" value="NM_027203.3"/>
</dbReference>
<dbReference type="SMR" id="Q9DB98"/>
<dbReference type="BioGRID" id="213661">
    <property type="interactions" value="2"/>
</dbReference>
<dbReference type="FunCoup" id="Q9DB98">
    <property type="interactions" value="49"/>
</dbReference>
<dbReference type="STRING" id="10090.ENSMUSP00000019878"/>
<dbReference type="iPTMnet" id="Q9DB98"/>
<dbReference type="PhosphoSitePlus" id="Q9DB98"/>
<dbReference type="PaxDb" id="10090-ENSMUSP00000019878"/>
<dbReference type="PeptideAtlas" id="Q9DB98"/>
<dbReference type="ProteomicsDB" id="292251"/>
<dbReference type="Pumba" id="Q9DB98"/>
<dbReference type="Antibodypedia" id="46337">
    <property type="antibodies" value="233 antibodies from 17 providers"/>
</dbReference>
<dbReference type="DNASU" id="69757"/>
<dbReference type="Ensembl" id="ENSMUST00000019878.8">
    <property type="protein sequence ID" value="ENSMUSP00000019878.8"/>
    <property type="gene ID" value="ENSMUSG00000078813.4"/>
</dbReference>
<dbReference type="GeneID" id="69757"/>
<dbReference type="KEGG" id="mmu:69757"/>
<dbReference type="UCSC" id="uc009evm.1">
    <property type="organism name" value="mouse"/>
</dbReference>
<dbReference type="AGR" id="MGI:1917007"/>
<dbReference type="CTD" id="79165"/>
<dbReference type="MGI" id="MGI:1917007">
    <property type="gene designation" value="Leng1"/>
</dbReference>
<dbReference type="VEuPathDB" id="HostDB:ENSMUSG00000078813"/>
<dbReference type="eggNOG" id="ENOG502RZ97">
    <property type="taxonomic scope" value="Eukaryota"/>
</dbReference>
<dbReference type="GeneTree" id="ENSGT00510000048131"/>
<dbReference type="HOGENOM" id="CLU_058751_2_0_1"/>
<dbReference type="InParanoid" id="Q9DB98"/>
<dbReference type="OMA" id="WYEELPK"/>
<dbReference type="OrthoDB" id="2159131at2759"/>
<dbReference type="PhylomeDB" id="Q9DB98"/>
<dbReference type="TreeFam" id="TF317830"/>
<dbReference type="Reactome" id="R-MMU-72163">
    <property type="pathway name" value="mRNA Splicing - Major Pathway"/>
</dbReference>
<dbReference type="BioGRID-ORCS" id="69757">
    <property type="hits" value="16 hits in 76 CRISPR screens"/>
</dbReference>
<dbReference type="PRO" id="PR:Q9DB98"/>
<dbReference type="Proteomes" id="UP000000589">
    <property type="component" value="Chromosome 7"/>
</dbReference>
<dbReference type="RNAct" id="Q9DB98">
    <property type="molecule type" value="protein"/>
</dbReference>
<dbReference type="Bgee" id="ENSMUSG00000078813">
    <property type="expression patterns" value="Expressed in saccule of membranous labyrinth and 234 other cell types or tissues"/>
</dbReference>
<dbReference type="InterPro" id="IPR019339">
    <property type="entry name" value="CIR_N_dom"/>
</dbReference>
<dbReference type="InterPro" id="IPR039875">
    <property type="entry name" value="LENG1-like"/>
</dbReference>
<dbReference type="PANTHER" id="PTHR22093">
    <property type="entry name" value="LEUKOCYTE RECEPTOR CLUSTER LRC MEMBER 1"/>
    <property type="match status" value="1"/>
</dbReference>
<dbReference type="PANTHER" id="PTHR22093:SF0">
    <property type="entry name" value="LEUKOCYTE RECEPTOR CLUSTER MEMBER 1"/>
    <property type="match status" value="1"/>
</dbReference>
<dbReference type="Pfam" id="PF10197">
    <property type="entry name" value="Cir_N"/>
    <property type="match status" value="1"/>
</dbReference>
<dbReference type="SMART" id="SM01083">
    <property type="entry name" value="Cir_N"/>
    <property type="match status" value="1"/>
</dbReference>
<feature type="chain" id="PRO_0000254628" description="Leukocyte receptor cluster member 1 homolog">
    <location>
        <begin position="1"/>
        <end position="261"/>
    </location>
</feature>
<feature type="region of interest" description="Disordered" evidence="3">
    <location>
        <begin position="1"/>
        <end position="261"/>
    </location>
</feature>
<feature type="coiled-coil region" evidence="2">
    <location>
        <begin position="16"/>
        <end position="46"/>
    </location>
</feature>
<feature type="coiled-coil region" evidence="2">
    <location>
        <begin position="192"/>
        <end position="222"/>
    </location>
</feature>
<feature type="compositionally biased region" description="Basic and acidic residues" evidence="3">
    <location>
        <begin position="12"/>
        <end position="38"/>
    </location>
</feature>
<feature type="compositionally biased region" description="Basic and acidic residues" evidence="3">
    <location>
        <begin position="78"/>
        <end position="109"/>
    </location>
</feature>
<feature type="compositionally biased region" description="Basic and acidic residues" evidence="3">
    <location>
        <begin position="147"/>
        <end position="163"/>
    </location>
</feature>
<feature type="compositionally biased region" description="Basic and acidic residues" evidence="3">
    <location>
        <begin position="171"/>
        <end position="211"/>
    </location>
</feature>
<feature type="compositionally biased region" description="Low complexity" evidence="3">
    <location>
        <begin position="212"/>
        <end position="228"/>
    </location>
</feature>
<feature type="modified residue" description="Phosphoserine" evidence="1">
    <location>
        <position position="59"/>
    </location>
</feature>
<feature type="modified residue" description="Phosphoserine" evidence="1">
    <location>
        <position position="242"/>
    </location>
</feature>
<protein>
    <recommendedName>
        <fullName>Leukocyte receptor cluster member 1 homolog</fullName>
    </recommendedName>
</protein>
<evidence type="ECO:0000250" key="1">
    <source>
        <dbReference type="UniProtKB" id="Q96BZ8"/>
    </source>
</evidence>
<evidence type="ECO:0000255" key="2"/>
<evidence type="ECO:0000256" key="3">
    <source>
        <dbReference type="SAM" id="MobiDB-lite"/>
    </source>
</evidence>
<reference key="1">
    <citation type="journal article" date="2005" name="Science">
        <title>The transcriptional landscape of the mammalian genome.</title>
        <authorList>
            <person name="Carninci P."/>
            <person name="Kasukawa T."/>
            <person name="Katayama S."/>
            <person name="Gough J."/>
            <person name="Frith M.C."/>
            <person name="Maeda N."/>
            <person name="Oyama R."/>
            <person name="Ravasi T."/>
            <person name="Lenhard B."/>
            <person name="Wells C."/>
            <person name="Kodzius R."/>
            <person name="Shimokawa K."/>
            <person name="Bajic V.B."/>
            <person name="Brenner S.E."/>
            <person name="Batalov S."/>
            <person name="Forrest A.R."/>
            <person name="Zavolan M."/>
            <person name="Davis M.J."/>
            <person name="Wilming L.G."/>
            <person name="Aidinis V."/>
            <person name="Allen J.E."/>
            <person name="Ambesi-Impiombato A."/>
            <person name="Apweiler R."/>
            <person name="Aturaliya R.N."/>
            <person name="Bailey T.L."/>
            <person name="Bansal M."/>
            <person name="Baxter L."/>
            <person name="Beisel K.W."/>
            <person name="Bersano T."/>
            <person name="Bono H."/>
            <person name="Chalk A.M."/>
            <person name="Chiu K.P."/>
            <person name="Choudhary V."/>
            <person name="Christoffels A."/>
            <person name="Clutterbuck D.R."/>
            <person name="Crowe M.L."/>
            <person name="Dalla E."/>
            <person name="Dalrymple B.P."/>
            <person name="de Bono B."/>
            <person name="Della Gatta G."/>
            <person name="di Bernardo D."/>
            <person name="Down T."/>
            <person name="Engstrom P."/>
            <person name="Fagiolini M."/>
            <person name="Faulkner G."/>
            <person name="Fletcher C.F."/>
            <person name="Fukushima T."/>
            <person name="Furuno M."/>
            <person name="Futaki S."/>
            <person name="Gariboldi M."/>
            <person name="Georgii-Hemming P."/>
            <person name="Gingeras T.R."/>
            <person name="Gojobori T."/>
            <person name="Green R.E."/>
            <person name="Gustincich S."/>
            <person name="Harbers M."/>
            <person name="Hayashi Y."/>
            <person name="Hensch T.K."/>
            <person name="Hirokawa N."/>
            <person name="Hill D."/>
            <person name="Huminiecki L."/>
            <person name="Iacono M."/>
            <person name="Ikeo K."/>
            <person name="Iwama A."/>
            <person name="Ishikawa T."/>
            <person name="Jakt M."/>
            <person name="Kanapin A."/>
            <person name="Katoh M."/>
            <person name="Kawasawa Y."/>
            <person name="Kelso J."/>
            <person name="Kitamura H."/>
            <person name="Kitano H."/>
            <person name="Kollias G."/>
            <person name="Krishnan S.P."/>
            <person name="Kruger A."/>
            <person name="Kummerfeld S.K."/>
            <person name="Kurochkin I.V."/>
            <person name="Lareau L.F."/>
            <person name="Lazarevic D."/>
            <person name="Lipovich L."/>
            <person name="Liu J."/>
            <person name="Liuni S."/>
            <person name="McWilliam S."/>
            <person name="Madan Babu M."/>
            <person name="Madera M."/>
            <person name="Marchionni L."/>
            <person name="Matsuda H."/>
            <person name="Matsuzawa S."/>
            <person name="Miki H."/>
            <person name="Mignone F."/>
            <person name="Miyake S."/>
            <person name="Morris K."/>
            <person name="Mottagui-Tabar S."/>
            <person name="Mulder N."/>
            <person name="Nakano N."/>
            <person name="Nakauchi H."/>
            <person name="Ng P."/>
            <person name="Nilsson R."/>
            <person name="Nishiguchi S."/>
            <person name="Nishikawa S."/>
            <person name="Nori F."/>
            <person name="Ohara O."/>
            <person name="Okazaki Y."/>
            <person name="Orlando V."/>
            <person name="Pang K.C."/>
            <person name="Pavan W.J."/>
            <person name="Pavesi G."/>
            <person name="Pesole G."/>
            <person name="Petrovsky N."/>
            <person name="Piazza S."/>
            <person name="Reed J."/>
            <person name="Reid J.F."/>
            <person name="Ring B.Z."/>
            <person name="Ringwald M."/>
            <person name="Rost B."/>
            <person name="Ruan Y."/>
            <person name="Salzberg S.L."/>
            <person name="Sandelin A."/>
            <person name="Schneider C."/>
            <person name="Schoenbach C."/>
            <person name="Sekiguchi K."/>
            <person name="Semple C.A."/>
            <person name="Seno S."/>
            <person name="Sessa L."/>
            <person name="Sheng Y."/>
            <person name="Shibata Y."/>
            <person name="Shimada H."/>
            <person name="Shimada K."/>
            <person name="Silva D."/>
            <person name="Sinclair B."/>
            <person name="Sperling S."/>
            <person name="Stupka E."/>
            <person name="Sugiura K."/>
            <person name="Sultana R."/>
            <person name="Takenaka Y."/>
            <person name="Taki K."/>
            <person name="Tammoja K."/>
            <person name="Tan S.L."/>
            <person name="Tang S."/>
            <person name="Taylor M.S."/>
            <person name="Tegner J."/>
            <person name="Teichmann S.A."/>
            <person name="Ueda H.R."/>
            <person name="van Nimwegen E."/>
            <person name="Verardo R."/>
            <person name="Wei C.L."/>
            <person name="Yagi K."/>
            <person name="Yamanishi H."/>
            <person name="Zabarovsky E."/>
            <person name="Zhu S."/>
            <person name="Zimmer A."/>
            <person name="Hide W."/>
            <person name="Bult C."/>
            <person name="Grimmond S.M."/>
            <person name="Teasdale R.D."/>
            <person name="Liu E.T."/>
            <person name="Brusic V."/>
            <person name="Quackenbush J."/>
            <person name="Wahlestedt C."/>
            <person name="Mattick J.S."/>
            <person name="Hume D.A."/>
            <person name="Kai C."/>
            <person name="Sasaki D."/>
            <person name="Tomaru Y."/>
            <person name="Fukuda S."/>
            <person name="Kanamori-Katayama M."/>
            <person name="Suzuki M."/>
            <person name="Aoki J."/>
            <person name="Arakawa T."/>
            <person name="Iida J."/>
            <person name="Imamura K."/>
            <person name="Itoh M."/>
            <person name="Kato T."/>
            <person name="Kawaji H."/>
            <person name="Kawagashira N."/>
            <person name="Kawashima T."/>
            <person name="Kojima M."/>
            <person name="Kondo S."/>
            <person name="Konno H."/>
            <person name="Nakano K."/>
            <person name="Ninomiya N."/>
            <person name="Nishio T."/>
            <person name="Okada M."/>
            <person name="Plessy C."/>
            <person name="Shibata K."/>
            <person name="Shiraki T."/>
            <person name="Suzuki S."/>
            <person name="Tagami M."/>
            <person name="Waki K."/>
            <person name="Watahiki A."/>
            <person name="Okamura-Oho Y."/>
            <person name="Suzuki H."/>
            <person name="Kawai J."/>
            <person name="Hayashizaki Y."/>
        </authorList>
    </citation>
    <scope>NUCLEOTIDE SEQUENCE [LARGE SCALE MRNA]</scope>
    <source>
        <strain>C57BL/6J</strain>
        <tissue>Cerebellum</tissue>
    </source>
</reference>
<reference key="2">
    <citation type="journal article" date="2004" name="Genome Res.">
        <title>The status, quality, and expansion of the NIH full-length cDNA project: the Mammalian Gene Collection (MGC).</title>
        <authorList>
            <consortium name="The MGC Project Team"/>
        </authorList>
    </citation>
    <scope>NUCLEOTIDE SEQUENCE [LARGE SCALE MRNA]</scope>
    <source>
        <strain>Czech II</strain>
        <tissue>Mammary tumor</tissue>
    </source>
</reference>
<sequence>MNILPKKSWHVRNKDNVARVRRDEAQAREEEKERERRVLLAQQEARTEFLRKKARQRNSVPELEAADPGAPSSGPVDLFRELLEERKGVPRGNKEHEEEKRREKERQEKALGILTYLGQSAAEAQTQPPWYQLPPGQKDCCPPGPSPDEKIKNRLDPLKEMQKHLAKKRHSSESRPSREERPQKQRPREPPSLEKLRAERLQREAAERARAEALLARVQGQVSQQGQVEAEETDERRRRYNSQFNPQLARRPRQQNPTPAH</sequence>
<proteinExistence type="evidence at transcript level"/>
<organism>
    <name type="scientific">Mus musculus</name>
    <name type="common">Mouse</name>
    <dbReference type="NCBI Taxonomy" id="10090"/>
    <lineage>
        <taxon>Eukaryota</taxon>
        <taxon>Metazoa</taxon>
        <taxon>Chordata</taxon>
        <taxon>Craniata</taxon>
        <taxon>Vertebrata</taxon>
        <taxon>Euteleostomi</taxon>
        <taxon>Mammalia</taxon>
        <taxon>Eutheria</taxon>
        <taxon>Euarchontoglires</taxon>
        <taxon>Glires</taxon>
        <taxon>Rodentia</taxon>
        <taxon>Myomorpha</taxon>
        <taxon>Muroidea</taxon>
        <taxon>Muridae</taxon>
        <taxon>Murinae</taxon>
        <taxon>Mus</taxon>
        <taxon>Mus</taxon>
    </lineage>
</organism>
<keyword id="KW-0175">Coiled coil</keyword>
<keyword id="KW-0597">Phosphoprotein</keyword>
<keyword id="KW-1185">Reference proteome</keyword>
<name>LENG1_MOUSE</name>
<accession>Q9DB98</accession>
<gene>
    <name type="primary">Leng1</name>
</gene>